<comment type="subcellular location">
    <subcellularLocation>
        <location evidence="1">Cytoplasm</location>
    </subcellularLocation>
</comment>
<comment type="similarity">
    <text evidence="1">Belongs to the WD repeat LST8 family.</text>
</comment>
<proteinExistence type="inferred from homology"/>
<evidence type="ECO:0000305" key="1"/>
<protein>
    <recommendedName>
        <fullName>Protein LST8 homolog</fullName>
    </recommendedName>
</protein>
<feature type="chain" id="PRO_0000326506" description="Protein LST8 homolog">
    <location>
        <begin position="1"/>
        <end position="315"/>
    </location>
</feature>
<feature type="repeat" description="WD 1">
    <location>
        <begin position="1"/>
        <end position="31"/>
    </location>
</feature>
<feature type="repeat" description="WD 2">
    <location>
        <begin position="33"/>
        <end position="71"/>
    </location>
</feature>
<feature type="repeat" description="WD 3">
    <location>
        <begin position="76"/>
        <end position="115"/>
    </location>
</feature>
<feature type="repeat" description="WD 4">
    <location>
        <begin position="119"/>
        <end position="158"/>
    </location>
</feature>
<feature type="repeat" description="WD 5">
    <location>
        <begin position="161"/>
        <end position="200"/>
    </location>
</feature>
<feature type="repeat" description="WD 6">
    <location>
        <begin position="211"/>
        <end position="250"/>
    </location>
</feature>
<feature type="repeat" description="WD 7">
    <location>
        <begin position="253"/>
        <end position="292"/>
    </location>
</feature>
<feature type="repeat" description="WD 8">
    <location>
        <begin position="295"/>
        <end position="315"/>
    </location>
</feature>
<accession>Q29HG9</accession>
<keyword id="KW-0963">Cytoplasm</keyword>
<keyword id="KW-1185">Reference proteome</keyword>
<keyword id="KW-0677">Repeat</keyword>
<keyword id="KW-0853">WD repeat</keyword>
<name>LST8_DROPS</name>
<reference key="1">
    <citation type="journal article" date="2005" name="Genome Res.">
        <title>Comparative genome sequencing of Drosophila pseudoobscura: chromosomal, gene, and cis-element evolution.</title>
        <authorList>
            <person name="Richards S."/>
            <person name="Liu Y."/>
            <person name="Bettencourt B.R."/>
            <person name="Hradecky P."/>
            <person name="Letovsky S."/>
            <person name="Nielsen R."/>
            <person name="Thornton K."/>
            <person name="Hubisz M.J."/>
            <person name="Chen R."/>
            <person name="Meisel R.P."/>
            <person name="Couronne O."/>
            <person name="Hua S."/>
            <person name="Smith M.A."/>
            <person name="Zhang P."/>
            <person name="Liu J."/>
            <person name="Bussemaker H.J."/>
            <person name="van Batenburg M.F."/>
            <person name="Howells S.L."/>
            <person name="Scherer S.E."/>
            <person name="Sodergren E."/>
            <person name="Matthews B.B."/>
            <person name="Crosby M.A."/>
            <person name="Schroeder A.J."/>
            <person name="Ortiz-Barrientos D."/>
            <person name="Rives C.M."/>
            <person name="Metzker M.L."/>
            <person name="Muzny D.M."/>
            <person name="Scott G."/>
            <person name="Steffen D."/>
            <person name="Wheeler D.A."/>
            <person name="Worley K.C."/>
            <person name="Havlak P."/>
            <person name="Durbin K.J."/>
            <person name="Egan A."/>
            <person name="Gill R."/>
            <person name="Hume J."/>
            <person name="Morgan M.B."/>
            <person name="Miner G."/>
            <person name="Hamilton C."/>
            <person name="Huang Y."/>
            <person name="Waldron L."/>
            <person name="Verduzco D."/>
            <person name="Clerc-Blankenburg K.P."/>
            <person name="Dubchak I."/>
            <person name="Noor M.A.F."/>
            <person name="Anderson W."/>
            <person name="White K.P."/>
            <person name="Clark A.G."/>
            <person name="Schaeffer S.W."/>
            <person name="Gelbart W.M."/>
            <person name="Weinstock G.M."/>
            <person name="Gibbs R.A."/>
        </authorList>
    </citation>
    <scope>NUCLEOTIDE SEQUENCE [LARGE SCALE GENOMIC DNA]</scope>
    <source>
        <strain>MV2-25 / Tucson 14011-0121.94</strain>
    </source>
</reference>
<gene>
    <name type="ORF">GA15597</name>
</gene>
<sequence length="315" mass="35522">MGDQLILATGGYDHTIKVWQAHTGNCIKTMRFVETSQVNALDRTPDKTRLAACGYQCIRLYDLESNCTAPVINFDGVQKNVTRLGFQEDGNWMFTAGEDHHVRIWDMISAPPHCSRVFDCESPVNAACLHPNQVEIGMGSQNGNVFLWDVKSEKHECIVPEVDASIQDVAISPDGHYLAAANNKGNCYIWSLCSSPDQKMSTMRPTKKIQAHTRYILRCKFSPDSRLLLTTSGDGTACLWKTSDFSKWRELCIENYWVWDAAFSADSKWLFTASSDGVARLWKLETKTPTREYTGHTKAITALSFKDEIIRKVNH</sequence>
<dbReference type="EMBL" id="CH379064">
    <property type="protein sequence ID" value="EAL31789.1"/>
    <property type="molecule type" value="Genomic_DNA"/>
</dbReference>
<dbReference type="SMR" id="Q29HG9"/>
<dbReference type="FunCoup" id="Q29HG9">
    <property type="interactions" value="1149"/>
</dbReference>
<dbReference type="STRING" id="46245.Q29HG9"/>
<dbReference type="eggNOG" id="KOG0315">
    <property type="taxonomic scope" value="Eukaryota"/>
</dbReference>
<dbReference type="HOGENOM" id="CLU_000288_57_5_1"/>
<dbReference type="InParanoid" id="Q29HG9"/>
<dbReference type="OMA" id="VQRNYKH"/>
<dbReference type="PhylomeDB" id="Q29HG9"/>
<dbReference type="Proteomes" id="UP000001819">
    <property type="component" value="Unplaced"/>
</dbReference>
<dbReference type="GO" id="GO:0005737">
    <property type="term" value="C:cytoplasm"/>
    <property type="evidence" value="ECO:0000250"/>
    <property type="project" value="UniProtKB"/>
</dbReference>
<dbReference type="GO" id="GO:0031931">
    <property type="term" value="C:TORC1 complex"/>
    <property type="evidence" value="ECO:0007669"/>
    <property type="project" value="InterPro"/>
</dbReference>
<dbReference type="GO" id="GO:0031932">
    <property type="term" value="C:TORC2 complex"/>
    <property type="evidence" value="ECO:0007669"/>
    <property type="project" value="InterPro"/>
</dbReference>
<dbReference type="GO" id="GO:0032956">
    <property type="term" value="P:regulation of actin cytoskeleton organization"/>
    <property type="evidence" value="ECO:0007669"/>
    <property type="project" value="TreeGrafter"/>
</dbReference>
<dbReference type="GO" id="GO:0031929">
    <property type="term" value="P:TOR signaling"/>
    <property type="evidence" value="ECO:0007669"/>
    <property type="project" value="InterPro"/>
</dbReference>
<dbReference type="CDD" id="cd00200">
    <property type="entry name" value="WD40"/>
    <property type="match status" value="1"/>
</dbReference>
<dbReference type="FunFam" id="2.130.10.10:FF:000505">
    <property type="entry name" value="Blast:Protein LST8 homolog"/>
    <property type="match status" value="1"/>
</dbReference>
<dbReference type="Gene3D" id="2.130.10.10">
    <property type="entry name" value="YVTN repeat-like/Quinoprotein amine dehydrogenase"/>
    <property type="match status" value="1"/>
</dbReference>
<dbReference type="InterPro" id="IPR020472">
    <property type="entry name" value="G-protein_beta_WD-40_rep"/>
</dbReference>
<dbReference type="InterPro" id="IPR037588">
    <property type="entry name" value="MLST8"/>
</dbReference>
<dbReference type="InterPro" id="IPR015943">
    <property type="entry name" value="WD40/YVTN_repeat-like_dom_sf"/>
</dbReference>
<dbReference type="InterPro" id="IPR019775">
    <property type="entry name" value="WD40_repeat_CS"/>
</dbReference>
<dbReference type="InterPro" id="IPR036322">
    <property type="entry name" value="WD40_repeat_dom_sf"/>
</dbReference>
<dbReference type="InterPro" id="IPR001680">
    <property type="entry name" value="WD40_rpt"/>
</dbReference>
<dbReference type="PANTHER" id="PTHR19842">
    <property type="entry name" value="G BETA-LIKE PROTEIN GBL"/>
    <property type="match status" value="1"/>
</dbReference>
<dbReference type="PANTHER" id="PTHR19842:SF0">
    <property type="entry name" value="TARGET OF RAPAMYCIN COMPLEX SUBUNIT LST8"/>
    <property type="match status" value="1"/>
</dbReference>
<dbReference type="Pfam" id="PF00400">
    <property type="entry name" value="WD40"/>
    <property type="match status" value="5"/>
</dbReference>
<dbReference type="PRINTS" id="PR00320">
    <property type="entry name" value="GPROTEINBRPT"/>
</dbReference>
<dbReference type="SMART" id="SM00320">
    <property type="entry name" value="WD40"/>
    <property type="match status" value="6"/>
</dbReference>
<dbReference type="SUPFAM" id="SSF50978">
    <property type="entry name" value="WD40 repeat-like"/>
    <property type="match status" value="1"/>
</dbReference>
<dbReference type="PROSITE" id="PS00678">
    <property type="entry name" value="WD_REPEATS_1"/>
    <property type="match status" value="2"/>
</dbReference>
<dbReference type="PROSITE" id="PS50082">
    <property type="entry name" value="WD_REPEATS_2"/>
    <property type="match status" value="4"/>
</dbReference>
<dbReference type="PROSITE" id="PS50294">
    <property type="entry name" value="WD_REPEATS_REGION"/>
    <property type="match status" value="1"/>
</dbReference>
<organism>
    <name type="scientific">Drosophila pseudoobscura pseudoobscura</name>
    <name type="common">Fruit fly</name>
    <dbReference type="NCBI Taxonomy" id="46245"/>
    <lineage>
        <taxon>Eukaryota</taxon>
        <taxon>Metazoa</taxon>
        <taxon>Ecdysozoa</taxon>
        <taxon>Arthropoda</taxon>
        <taxon>Hexapoda</taxon>
        <taxon>Insecta</taxon>
        <taxon>Pterygota</taxon>
        <taxon>Neoptera</taxon>
        <taxon>Endopterygota</taxon>
        <taxon>Diptera</taxon>
        <taxon>Brachycera</taxon>
        <taxon>Muscomorpha</taxon>
        <taxon>Ephydroidea</taxon>
        <taxon>Drosophilidae</taxon>
        <taxon>Drosophila</taxon>
        <taxon>Sophophora</taxon>
    </lineage>
</organism>